<evidence type="ECO:0000250" key="1"/>
<evidence type="ECO:0000305" key="2"/>
<reference key="1">
    <citation type="journal article" date="2005" name="Gene">
        <title>The first complete chloroplast genome sequence of a lycophyte, Huperzia lucidula (Lycopodiaceae).</title>
        <authorList>
            <person name="Wolf P.G."/>
            <person name="Karol K.G."/>
            <person name="Mandoli D.F."/>
            <person name="Kuehl J.V."/>
            <person name="Arumuganathan K."/>
            <person name="Ellis M.W."/>
            <person name="Mishler B.D."/>
            <person name="Kelch D.G."/>
            <person name="Olmstead R.G."/>
            <person name="Boore J.L."/>
        </authorList>
    </citation>
    <scope>NUCLEOTIDE SEQUENCE [LARGE SCALE GENOMIC DNA]</scope>
</reference>
<organism>
    <name type="scientific">Huperzia lucidula</name>
    <name type="common">Shining clubmoss</name>
    <name type="synonym">Lycopodium lucidulum</name>
    <dbReference type="NCBI Taxonomy" id="37429"/>
    <lineage>
        <taxon>Eukaryota</taxon>
        <taxon>Viridiplantae</taxon>
        <taxon>Streptophyta</taxon>
        <taxon>Embryophyta</taxon>
        <taxon>Tracheophyta</taxon>
        <taxon>Lycopodiopsida</taxon>
        <taxon>Lycopodiales</taxon>
        <taxon>Lycopodiaceae</taxon>
        <taxon>Huperzioideae</taxon>
        <taxon>Huperzia</taxon>
    </lineage>
</organism>
<keyword id="KW-0150">Chloroplast</keyword>
<keyword id="KW-0934">Plastid</keyword>
<keyword id="KW-0687">Ribonucleoprotein</keyword>
<keyword id="KW-0689">Ribosomal protein</keyword>
<keyword id="KW-0694">RNA-binding</keyword>
<keyword id="KW-0699">rRNA-binding</keyword>
<accession>Q5SD20</accession>
<geneLocation type="chloroplast"/>
<name>RK22_HUPLU</name>
<proteinExistence type="inferred from homology"/>
<feature type="chain" id="PRO_0000125307" description="Large ribosomal subunit protein uL22c">
    <location>
        <begin position="1"/>
        <end position="125"/>
    </location>
</feature>
<gene>
    <name type="primary">rpl22</name>
</gene>
<sequence>MKIGNDSNKEVKIFVKNIHMSAYKLRRVVNQIRGHSYGEAVMILEFMPYRACYPVLKLVSNAAENANHKMGLRKADLFVSEVKVDAGSFAKRLRLRAQGRNYPIHKPTCHITIILKKKSVYKEEL</sequence>
<protein>
    <recommendedName>
        <fullName evidence="2">Large ribosomal subunit protein uL22c</fullName>
    </recommendedName>
    <alternativeName>
        <fullName>50S ribosomal protein L22, chloroplastic</fullName>
    </alternativeName>
</protein>
<comment type="function">
    <text evidence="1">This protein binds specifically to 23S rRNA.</text>
</comment>
<comment type="function">
    <text evidence="1">The globular domain of the protein is located near the polypeptide exit tunnel on the outside of the subunit, while an extended beta-hairpin is found that lines the wall of the exit tunnel in the center of the 70S ribosome.</text>
</comment>
<comment type="subunit">
    <text evidence="1">Part of the 50S ribosomal subunit.</text>
</comment>
<comment type="subcellular location">
    <subcellularLocation>
        <location>Plastid</location>
        <location>Chloroplast</location>
    </subcellularLocation>
</comment>
<comment type="similarity">
    <text evidence="2">Belongs to the universal ribosomal protein uL22 family.</text>
</comment>
<dbReference type="EMBL" id="AY660566">
    <property type="protein sequence ID" value="AAT80685.1"/>
    <property type="molecule type" value="Genomic_DNA"/>
</dbReference>
<dbReference type="RefSeq" id="YP_209489.1">
    <property type="nucleotide sequence ID" value="NC_006861.1"/>
</dbReference>
<dbReference type="SMR" id="Q5SD20"/>
<dbReference type="GeneID" id="3283768"/>
<dbReference type="GO" id="GO:0009507">
    <property type="term" value="C:chloroplast"/>
    <property type="evidence" value="ECO:0007669"/>
    <property type="project" value="UniProtKB-SubCell"/>
</dbReference>
<dbReference type="GO" id="GO:0015934">
    <property type="term" value="C:large ribosomal subunit"/>
    <property type="evidence" value="ECO:0007669"/>
    <property type="project" value="InterPro"/>
</dbReference>
<dbReference type="GO" id="GO:0019843">
    <property type="term" value="F:rRNA binding"/>
    <property type="evidence" value="ECO:0007669"/>
    <property type="project" value="UniProtKB-UniRule"/>
</dbReference>
<dbReference type="GO" id="GO:0003735">
    <property type="term" value="F:structural constituent of ribosome"/>
    <property type="evidence" value="ECO:0007669"/>
    <property type="project" value="InterPro"/>
</dbReference>
<dbReference type="GO" id="GO:0006412">
    <property type="term" value="P:translation"/>
    <property type="evidence" value="ECO:0007669"/>
    <property type="project" value="UniProtKB-UniRule"/>
</dbReference>
<dbReference type="CDD" id="cd00336">
    <property type="entry name" value="Ribosomal_L22"/>
    <property type="match status" value="1"/>
</dbReference>
<dbReference type="Gene3D" id="3.90.470.10">
    <property type="entry name" value="Ribosomal protein L22/L17"/>
    <property type="match status" value="1"/>
</dbReference>
<dbReference type="HAMAP" id="MF_01331_B">
    <property type="entry name" value="Ribosomal_uL22_B"/>
    <property type="match status" value="1"/>
</dbReference>
<dbReference type="InterPro" id="IPR001063">
    <property type="entry name" value="Ribosomal_uL22"/>
</dbReference>
<dbReference type="InterPro" id="IPR005727">
    <property type="entry name" value="Ribosomal_uL22_bac/chlpt-type"/>
</dbReference>
<dbReference type="InterPro" id="IPR047867">
    <property type="entry name" value="Ribosomal_uL22_bac/org-type"/>
</dbReference>
<dbReference type="InterPro" id="IPR018260">
    <property type="entry name" value="Ribosomal_uL22_CS"/>
</dbReference>
<dbReference type="InterPro" id="IPR036394">
    <property type="entry name" value="Ribosomal_uL22_sf"/>
</dbReference>
<dbReference type="NCBIfam" id="TIGR01044">
    <property type="entry name" value="rplV_bact"/>
    <property type="match status" value="1"/>
</dbReference>
<dbReference type="PANTHER" id="PTHR13501">
    <property type="entry name" value="CHLOROPLAST 50S RIBOSOMAL PROTEIN L22-RELATED"/>
    <property type="match status" value="1"/>
</dbReference>
<dbReference type="PANTHER" id="PTHR13501:SF10">
    <property type="entry name" value="LARGE RIBOSOMAL SUBUNIT PROTEIN UL22M"/>
    <property type="match status" value="1"/>
</dbReference>
<dbReference type="Pfam" id="PF00237">
    <property type="entry name" value="Ribosomal_L22"/>
    <property type="match status" value="1"/>
</dbReference>
<dbReference type="SUPFAM" id="SSF54843">
    <property type="entry name" value="Ribosomal protein L22"/>
    <property type="match status" value="1"/>
</dbReference>
<dbReference type="PROSITE" id="PS00464">
    <property type="entry name" value="RIBOSOMAL_L22"/>
    <property type="match status" value="1"/>
</dbReference>